<protein>
    <recommendedName>
        <fullName evidence="1">Large ribosomal subunit protein uL18</fullName>
    </recommendedName>
    <alternativeName>
        <fullName evidence="2">50S ribosomal protein L18</fullName>
    </alternativeName>
</protein>
<accession>B8H4F0</accession>
<keyword id="KW-1185">Reference proteome</keyword>
<keyword id="KW-0687">Ribonucleoprotein</keyword>
<keyword id="KW-0689">Ribosomal protein</keyword>
<keyword id="KW-0694">RNA-binding</keyword>
<keyword id="KW-0699">rRNA-binding</keyword>
<gene>
    <name evidence="1" type="primary">rplR</name>
    <name type="ordered locus">CCNA_01322</name>
</gene>
<comment type="function">
    <text evidence="1">This is one of the proteins that bind and probably mediate the attachment of the 5S RNA into the large ribosomal subunit, where it forms part of the central protuberance.</text>
</comment>
<comment type="subunit">
    <text evidence="1">Part of the 50S ribosomal subunit; part of the 5S rRNA/L5/L18/L25 subcomplex. Contacts the 5S and 23S rRNAs.</text>
</comment>
<comment type="similarity">
    <text evidence="1">Belongs to the universal ribosomal protein uL18 family.</text>
</comment>
<feature type="chain" id="PRO_1000166216" description="Large ribosomal subunit protein uL18">
    <location>
        <begin position="1"/>
        <end position="116"/>
    </location>
</feature>
<proteinExistence type="inferred from homology"/>
<reference key="1">
    <citation type="journal article" date="2010" name="J. Bacteriol.">
        <title>The genetic basis of laboratory adaptation in Caulobacter crescentus.</title>
        <authorList>
            <person name="Marks M.E."/>
            <person name="Castro-Rojas C.M."/>
            <person name="Teiling C."/>
            <person name="Du L."/>
            <person name="Kapatral V."/>
            <person name="Walunas T.L."/>
            <person name="Crosson S."/>
        </authorList>
    </citation>
    <scope>NUCLEOTIDE SEQUENCE [LARGE SCALE GENOMIC DNA]</scope>
    <source>
        <strain>NA1000 / CB15N</strain>
    </source>
</reference>
<evidence type="ECO:0000255" key="1">
    <source>
        <dbReference type="HAMAP-Rule" id="MF_01337"/>
    </source>
</evidence>
<evidence type="ECO:0000305" key="2"/>
<organism>
    <name type="scientific">Caulobacter vibrioides (strain NA1000 / CB15N)</name>
    <name type="common">Caulobacter crescentus</name>
    <dbReference type="NCBI Taxonomy" id="565050"/>
    <lineage>
        <taxon>Bacteria</taxon>
        <taxon>Pseudomonadati</taxon>
        <taxon>Pseudomonadota</taxon>
        <taxon>Alphaproteobacteria</taxon>
        <taxon>Caulobacterales</taxon>
        <taxon>Caulobacteraceae</taxon>
        <taxon>Caulobacter</taxon>
    </lineage>
</organism>
<dbReference type="EMBL" id="CP001340">
    <property type="protein sequence ID" value="ACL94787.1"/>
    <property type="molecule type" value="Genomic_DNA"/>
</dbReference>
<dbReference type="RefSeq" id="WP_010919143.1">
    <property type="nucleotide sequence ID" value="NC_011916.1"/>
</dbReference>
<dbReference type="RefSeq" id="YP_002516695.1">
    <property type="nucleotide sequence ID" value="NC_011916.1"/>
</dbReference>
<dbReference type="SMR" id="B8H4F0"/>
<dbReference type="GeneID" id="7333054"/>
<dbReference type="KEGG" id="ccs:CCNA_01322"/>
<dbReference type="PATRIC" id="fig|565050.3.peg.1306"/>
<dbReference type="HOGENOM" id="CLU_098841_0_1_5"/>
<dbReference type="OrthoDB" id="9810939at2"/>
<dbReference type="PhylomeDB" id="B8H4F0"/>
<dbReference type="Proteomes" id="UP000001364">
    <property type="component" value="Chromosome"/>
</dbReference>
<dbReference type="GO" id="GO:0022625">
    <property type="term" value="C:cytosolic large ribosomal subunit"/>
    <property type="evidence" value="ECO:0007669"/>
    <property type="project" value="TreeGrafter"/>
</dbReference>
<dbReference type="GO" id="GO:0008097">
    <property type="term" value="F:5S rRNA binding"/>
    <property type="evidence" value="ECO:0007669"/>
    <property type="project" value="TreeGrafter"/>
</dbReference>
<dbReference type="GO" id="GO:0003735">
    <property type="term" value="F:structural constituent of ribosome"/>
    <property type="evidence" value="ECO:0007669"/>
    <property type="project" value="InterPro"/>
</dbReference>
<dbReference type="GO" id="GO:0006412">
    <property type="term" value="P:translation"/>
    <property type="evidence" value="ECO:0007669"/>
    <property type="project" value="UniProtKB-UniRule"/>
</dbReference>
<dbReference type="CDD" id="cd00432">
    <property type="entry name" value="Ribosomal_L18_L5e"/>
    <property type="match status" value="1"/>
</dbReference>
<dbReference type="FunFam" id="3.30.420.100:FF:000001">
    <property type="entry name" value="50S ribosomal protein L18"/>
    <property type="match status" value="1"/>
</dbReference>
<dbReference type="Gene3D" id="3.30.420.100">
    <property type="match status" value="1"/>
</dbReference>
<dbReference type="HAMAP" id="MF_01337_B">
    <property type="entry name" value="Ribosomal_uL18_B"/>
    <property type="match status" value="1"/>
</dbReference>
<dbReference type="InterPro" id="IPR004389">
    <property type="entry name" value="Ribosomal_uL18_bac-type"/>
</dbReference>
<dbReference type="InterPro" id="IPR005484">
    <property type="entry name" value="Ribosomal_uL18_bac/euk"/>
</dbReference>
<dbReference type="NCBIfam" id="TIGR00060">
    <property type="entry name" value="L18_bact"/>
    <property type="match status" value="1"/>
</dbReference>
<dbReference type="PANTHER" id="PTHR12899">
    <property type="entry name" value="39S RIBOSOMAL PROTEIN L18, MITOCHONDRIAL"/>
    <property type="match status" value="1"/>
</dbReference>
<dbReference type="PANTHER" id="PTHR12899:SF3">
    <property type="entry name" value="LARGE RIBOSOMAL SUBUNIT PROTEIN UL18M"/>
    <property type="match status" value="1"/>
</dbReference>
<dbReference type="Pfam" id="PF00861">
    <property type="entry name" value="Ribosomal_L18p"/>
    <property type="match status" value="1"/>
</dbReference>
<dbReference type="SUPFAM" id="SSF53137">
    <property type="entry name" value="Translational machinery components"/>
    <property type="match status" value="1"/>
</dbReference>
<sequence length="116" mass="12443">MALSPRESAAKRAQRVRTRLKSLANGRPRLSVFRSSKNIYAQVIDDERGVTLASASTLEAEGKGADKDAAAAVGKLVAERAIEKGVKDVVFDRGSYIFHGRVKALADAAREAGLNF</sequence>
<name>RL18_CAUVN</name>